<protein>
    <recommendedName>
        <fullName evidence="1">Nucleoid-associated protein PMN2A_1347</fullName>
    </recommendedName>
</protein>
<evidence type="ECO:0000255" key="1">
    <source>
        <dbReference type="HAMAP-Rule" id="MF_00274"/>
    </source>
</evidence>
<evidence type="ECO:0000256" key="2">
    <source>
        <dbReference type="SAM" id="MobiDB-lite"/>
    </source>
</evidence>
<name>Y1347_PROMT</name>
<reference key="1">
    <citation type="journal article" date="2007" name="PLoS Genet.">
        <title>Patterns and implications of gene gain and loss in the evolution of Prochlorococcus.</title>
        <authorList>
            <person name="Kettler G.C."/>
            <person name="Martiny A.C."/>
            <person name="Huang K."/>
            <person name="Zucker J."/>
            <person name="Coleman M.L."/>
            <person name="Rodrigue S."/>
            <person name="Chen F."/>
            <person name="Lapidus A."/>
            <person name="Ferriera S."/>
            <person name="Johnson J."/>
            <person name="Steglich C."/>
            <person name="Church G.M."/>
            <person name="Richardson P."/>
            <person name="Chisholm S.W."/>
        </authorList>
    </citation>
    <scope>NUCLEOTIDE SEQUENCE [LARGE SCALE GENOMIC DNA]</scope>
    <source>
        <strain>NATL2A</strain>
    </source>
</reference>
<gene>
    <name type="ordered locus">PMN2A_1347</name>
</gene>
<accession>Q46I42</accession>
<organism>
    <name type="scientific">Prochlorococcus marinus (strain NATL2A)</name>
    <dbReference type="NCBI Taxonomy" id="59920"/>
    <lineage>
        <taxon>Bacteria</taxon>
        <taxon>Bacillati</taxon>
        <taxon>Cyanobacteriota</taxon>
        <taxon>Cyanophyceae</taxon>
        <taxon>Synechococcales</taxon>
        <taxon>Prochlorococcaceae</taxon>
        <taxon>Prochlorococcus</taxon>
    </lineage>
</organism>
<proteinExistence type="inferred from homology"/>
<comment type="function">
    <text evidence="1">Binds to DNA and alters its conformation. May be involved in regulation of gene expression, nucleoid organization and DNA protection.</text>
</comment>
<comment type="subunit">
    <text evidence="1">Homodimer.</text>
</comment>
<comment type="subcellular location">
    <subcellularLocation>
        <location evidence="1">Cytoplasm</location>
        <location evidence="1">Nucleoid</location>
    </subcellularLocation>
</comment>
<comment type="similarity">
    <text evidence="1">Belongs to the YbaB/EbfC family.</text>
</comment>
<sequence length="115" mass="12767">MAGFGLPNFGQLTEAFKKAQQIQQNAQKLQEELEVMEIEGTNDDNRAKIWMSGNQKPLRVEIDPSLLSEGKAIIEEAILDAMKSAHEVSTSTMKERMEDLTGGFKLNLPGMGEEN</sequence>
<feature type="chain" id="PRO_1000003798" description="Nucleoid-associated protein PMN2A_1347">
    <location>
        <begin position="1"/>
        <end position="115"/>
    </location>
</feature>
<feature type="region of interest" description="Disordered" evidence="2">
    <location>
        <begin position="89"/>
        <end position="115"/>
    </location>
</feature>
<dbReference type="EMBL" id="CP000095">
    <property type="protein sequence ID" value="AAZ58836.1"/>
    <property type="molecule type" value="Genomic_DNA"/>
</dbReference>
<dbReference type="RefSeq" id="WP_011293980.1">
    <property type="nucleotide sequence ID" value="NC_007335.2"/>
</dbReference>
<dbReference type="SMR" id="Q46I42"/>
<dbReference type="STRING" id="59920.PMN2A_1347"/>
<dbReference type="KEGG" id="pmn:PMN2A_1347"/>
<dbReference type="HOGENOM" id="CLU_140930_0_1_3"/>
<dbReference type="OrthoDB" id="487780at2"/>
<dbReference type="PhylomeDB" id="Q46I42"/>
<dbReference type="Proteomes" id="UP000002535">
    <property type="component" value="Chromosome"/>
</dbReference>
<dbReference type="GO" id="GO:0043590">
    <property type="term" value="C:bacterial nucleoid"/>
    <property type="evidence" value="ECO:0007669"/>
    <property type="project" value="UniProtKB-UniRule"/>
</dbReference>
<dbReference type="GO" id="GO:0005829">
    <property type="term" value="C:cytosol"/>
    <property type="evidence" value="ECO:0007669"/>
    <property type="project" value="TreeGrafter"/>
</dbReference>
<dbReference type="GO" id="GO:0003677">
    <property type="term" value="F:DNA binding"/>
    <property type="evidence" value="ECO:0007669"/>
    <property type="project" value="UniProtKB-UniRule"/>
</dbReference>
<dbReference type="Gene3D" id="3.30.1310.10">
    <property type="entry name" value="Nucleoid-associated protein YbaB-like domain"/>
    <property type="match status" value="1"/>
</dbReference>
<dbReference type="HAMAP" id="MF_00274">
    <property type="entry name" value="DNA_YbaB_EbfC"/>
    <property type="match status" value="1"/>
</dbReference>
<dbReference type="InterPro" id="IPR036894">
    <property type="entry name" value="YbaB-like_sf"/>
</dbReference>
<dbReference type="InterPro" id="IPR004401">
    <property type="entry name" value="YbaB/EbfC"/>
</dbReference>
<dbReference type="NCBIfam" id="TIGR00103">
    <property type="entry name" value="DNA_YbaB_EbfC"/>
    <property type="match status" value="1"/>
</dbReference>
<dbReference type="PANTHER" id="PTHR33449">
    <property type="entry name" value="NUCLEOID-ASSOCIATED PROTEIN YBAB"/>
    <property type="match status" value="1"/>
</dbReference>
<dbReference type="PANTHER" id="PTHR33449:SF1">
    <property type="entry name" value="NUCLEOID-ASSOCIATED PROTEIN YBAB"/>
    <property type="match status" value="1"/>
</dbReference>
<dbReference type="Pfam" id="PF02575">
    <property type="entry name" value="YbaB_DNA_bd"/>
    <property type="match status" value="1"/>
</dbReference>
<dbReference type="PIRSF" id="PIRSF004555">
    <property type="entry name" value="UCP004555"/>
    <property type="match status" value="1"/>
</dbReference>
<dbReference type="SUPFAM" id="SSF82607">
    <property type="entry name" value="YbaB-like"/>
    <property type="match status" value="1"/>
</dbReference>
<keyword id="KW-0963">Cytoplasm</keyword>
<keyword id="KW-0238">DNA-binding</keyword>
<keyword id="KW-1185">Reference proteome</keyword>